<name>PPAC_METTP</name>
<proteinExistence type="evidence at protein level"/>
<protein>
    <recommendedName>
        <fullName>Manganese-dependent inorganic pyrophosphatase</fullName>
        <ecNumber>3.6.1.1</ecNumber>
    </recommendedName>
    <alternativeName>
        <fullName>Pyrophosphate phospho-hydrolase</fullName>
        <shortName>PPase</shortName>
    </alternativeName>
</protein>
<evidence type="ECO:0000250" key="1"/>
<evidence type="ECO:0000269" key="2">
    <source>
    </source>
</evidence>
<evidence type="ECO:0000305" key="3"/>
<evidence type="ECO:0000305" key="4">
    <source>
    </source>
</evidence>
<accession>A0B5R0</accession>
<dbReference type="EC" id="3.6.1.1"/>
<dbReference type="EMBL" id="CP000477">
    <property type="protein sequence ID" value="ABK14034.1"/>
    <property type="molecule type" value="Genomic_DNA"/>
</dbReference>
<dbReference type="RefSeq" id="WP_011695433.1">
    <property type="nucleotide sequence ID" value="NC_008553.1"/>
</dbReference>
<dbReference type="SMR" id="A0B5R0"/>
<dbReference type="STRING" id="349307.Mthe_0236"/>
<dbReference type="GeneID" id="4462009"/>
<dbReference type="KEGG" id="mtp:Mthe_0236"/>
<dbReference type="HOGENOM" id="CLU_025243_0_1_2"/>
<dbReference type="OrthoDB" id="114945at2157"/>
<dbReference type="BRENDA" id="3.6.1.1">
    <property type="organism ID" value="11925"/>
</dbReference>
<dbReference type="SABIO-RK" id="A0B5R0"/>
<dbReference type="Proteomes" id="UP000000674">
    <property type="component" value="Chromosome"/>
</dbReference>
<dbReference type="GO" id="GO:0005737">
    <property type="term" value="C:cytoplasm"/>
    <property type="evidence" value="ECO:0007669"/>
    <property type="project" value="InterPro"/>
</dbReference>
<dbReference type="GO" id="GO:0004427">
    <property type="term" value="F:inorganic diphosphate phosphatase activity"/>
    <property type="evidence" value="ECO:0007669"/>
    <property type="project" value="UniProtKB-EC"/>
</dbReference>
<dbReference type="GO" id="GO:0046872">
    <property type="term" value="F:metal ion binding"/>
    <property type="evidence" value="ECO:0007669"/>
    <property type="project" value="UniProtKB-KW"/>
</dbReference>
<dbReference type="FunFam" id="3.90.1640.10:FF:000001">
    <property type="entry name" value="Probable manganese-dependent inorganic pyrophosphatase"/>
    <property type="match status" value="1"/>
</dbReference>
<dbReference type="Gene3D" id="3.10.310.20">
    <property type="entry name" value="DHHA2 domain"/>
    <property type="match status" value="1"/>
</dbReference>
<dbReference type="Gene3D" id="3.90.1640.10">
    <property type="entry name" value="inorganic pyrophosphatase (n-terminal core)"/>
    <property type="match status" value="1"/>
</dbReference>
<dbReference type="InterPro" id="IPR001667">
    <property type="entry name" value="DDH_dom"/>
</dbReference>
<dbReference type="InterPro" id="IPR038763">
    <property type="entry name" value="DHH_sf"/>
</dbReference>
<dbReference type="InterPro" id="IPR004097">
    <property type="entry name" value="DHHA2"/>
</dbReference>
<dbReference type="InterPro" id="IPR038222">
    <property type="entry name" value="DHHA2_dom_sf"/>
</dbReference>
<dbReference type="NCBIfam" id="NF003877">
    <property type="entry name" value="PRK05427.1"/>
    <property type="match status" value="1"/>
</dbReference>
<dbReference type="PANTHER" id="PTHR12112">
    <property type="entry name" value="BNIP - RELATED"/>
    <property type="match status" value="1"/>
</dbReference>
<dbReference type="PANTHER" id="PTHR12112:SF22">
    <property type="entry name" value="MANGANESE-DEPENDENT INORGANIC PYROPHOSPHATASE-RELATED"/>
    <property type="match status" value="1"/>
</dbReference>
<dbReference type="Pfam" id="PF01368">
    <property type="entry name" value="DHH"/>
    <property type="match status" value="1"/>
</dbReference>
<dbReference type="Pfam" id="PF02833">
    <property type="entry name" value="DHHA2"/>
    <property type="match status" value="1"/>
</dbReference>
<dbReference type="SMART" id="SM01131">
    <property type="entry name" value="DHHA2"/>
    <property type="match status" value="1"/>
</dbReference>
<dbReference type="SUPFAM" id="SSF64182">
    <property type="entry name" value="DHH phosphoesterases"/>
    <property type="match status" value="1"/>
</dbReference>
<gene>
    <name type="primary">ppaC</name>
    <name type="ordered locus">Mthe_0236</name>
</gene>
<comment type="catalytic activity">
    <reaction evidence="2">
        <text>diphosphate + H2O = 2 phosphate + H(+)</text>
        <dbReference type="Rhea" id="RHEA:24576"/>
        <dbReference type="ChEBI" id="CHEBI:15377"/>
        <dbReference type="ChEBI" id="CHEBI:15378"/>
        <dbReference type="ChEBI" id="CHEBI:33019"/>
        <dbReference type="ChEBI" id="CHEBI:43474"/>
        <dbReference type="EC" id="3.6.1.1"/>
    </reaction>
</comment>
<comment type="cofactor">
    <cofactor evidence="4">
        <name>Mn(2+)</name>
        <dbReference type="ChEBI" id="CHEBI:29035"/>
    </cofactor>
    <text evidence="4">Binds 2 manganese ions per subunit.</text>
</comment>
<comment type="biophysicochemical properties">
    <kinetics>
        <KM evidence="2">0.27 mM for diphosphate (with manganese as cofactor)</KM>
        <Vmax evidence="2">157.0 umol/min/mg enzyme with magnesium as cofactor</Vmax>
        <Vmax evidence="2">726.0 umol/min/mg enzyme with manganese as cofactor</Vmax>
    </kinetics>
</comment>
<comment type="subunit">
    <text evidence="2">Homodimer.</text>
</comment>
<comment type="similarity">
    <text evidence="3">Belongs to the PPase class C family.</text>
</comment>
<feature type="chain" id="PRO_0000429049" description="Manganese-dependent inorganic pyrophosphatase">
    <location>
        <begin position="1"/>
        <end position="311"/>
    </location>
</feature>
<feature type="binding site" evidence="1">
    <location>
        <position position="10"/>
    </location>
    <ligand>
        <name>Mn(2+)</name>
        <dbReference type="ChEBI" id="CHEBI:29035"/>
        <label>1</label>
    </ligand>
</feature>
<feature type="binding site" evidence="1">
    <location>
        <position position="14"/>
    </location>
    <ligand>
        <name>Mn(2+)</name>
        <dbReference type="ChEBI" id="CHEBI:29035"/>
        <label>1</label>
    </ligand>
</feature>
<feature type="binding site" evidence="1">
    <location>
        <position position="16"/>
    </location>
    <ligand>
        <name>Mn(2+)</name>
        <dbReference type="ChEBI" id="CHEBI:29035"/>
        <label>2</label>
    </ligand>
</feature>
<feature type="binding site" evidence="1">
    <location>
        <position position="75"/>
    </location>
    <ligand>
        <name>Mn(2+)</name>
        <dbReference type="ChEBI" id="CHEBI:29035"/>
        <label>1</label>
    </ligand>
</feature>
<feature type="binding site" evidence="1">
    <location>
        <position position="75"/>
    </location>
    <ligand>
        <name>Mn(2+)</name>
        <dbReference type="ChEBI" id="CHEBI:29035"/>
        <label>2</label>
    </ligand>
</feature>
<feature type="binding site" evidence="1">
    <location>
        <position position="97"/>
    </location>
    <ligand>
        <name>Mn(2+)</name>
        <dbReference type="ChEBI" id="CHEBI:29035"/>
        <label>2</label>
    </ligand>
</feature>
<feature type="binding site" evidence="1">
    <location>
        <position position="149"/>
    </location>
    <ligand>
        <name>Mn(2+)</name>
        <dbReference type="ChEBI" id="CHEBI:29035"/>
        <label>2</label>
    </ligand>
</feature>
<reference key="1">
    <citation type="submission" date="2006-10" db="EMBL/GenBank/DDBJ databases">
        <title>Complete sequence of Methanosaeta thermophila PT.</title>
        <authorList>
            <consortium name="US DOE Joint Genome Institute"/>
            <person name="Copeland A."/>
            <person name="Lucas S."/>
            <person name="Lapidus A."/>
            <person name="Barry K."/>
            <person name="Detter J.C."/>
            <person name="Glavina del Rio T."/>
            <person name="Hammon N."/>
            <person name="Israni S."/>
            <person name="Pitluck S."/>
            <person name="Chain P."/>
            <person name="Malfatti S."/>
            <person name="Shin M."/>
            <person name="Vergez L."/>
            <person name="Schmutz J."/>
            <person name="Larimer F."/>
            <person name="Land M."/>
            <person name="Hauser L."/>
            <person name="Kyrpides N."/>
            <person name="Kim E."/>
            <person name="Smith K.S."/>
            <person name="Ingram-Smith C."/>
            <person name="Richardson P."/>
        </authorList>
    </citation>
    <scope>NUCLEOTIDE SEQUENCE [LARGE SCALE GENOMIC DNA]</scope>
    <source>
        <strain>DSM 6194 / JCM 14653 / NBRC 101360 / PT</strain>
    </source>
</reference>
<reference key="2">
    <citation type="journal article" date="2012" name="Archaea">
        <title>Acetate activation in Methanosaeta thermophila: characterization of the key enzymes pyrophosphatase and acetyl-CoA synthetase.</title>
        <authorList>
            <person name="Berger S."/>
            <person name="Welte C."/>
            <person name="Deppenmeier U."/>
        </authorList>
    </citation>
    <scope>CATALYTIC ACTIVITY</scope>
    <scope>SUBUNIT</scope>
    <scope>COFACTOR</scope>
    <scope>BIOPHYSICOCHEMICAL PROPERTIES</scope>
    <source>
        <strain>DSM 6194 / JCM 14653 / NBRC 101360 / PT</strain>
    </source>
</reference>
<keyword id="KW-0378">Hydrolase</keyword>
<keyword id="KW-0464">Manganese</keyword>
<keyword id="KW-0479">Metal-binding</keyword>
<keyword id="KW-1185">Reference proteome</keyword>
<organism>
    <name type="scientific">Methanothrix thermoacetophila (strain DSM 6194 / JCM 14653 / NBRC 101360 / PT)</name>
    <name type="common">Methanosaeta thermophila</name>
    <dbReference type="NCBI Taxonomy" id="349307"/>
    <lineage>
        <taxon>Archaea</taxon>
        <taxon>Methanobacteriati</taxon>
        <taxon>Methanobacteriota</taxon>
        <taxon>Stenosarchaea group</taxon>
        <taxon>Methanomicrobia</taxon>
        <taxon>Methanotrichales</taxon>
        <taxon>Methanotrichaceae</taxon>
        <taxon>Methanothrix</taxon>
    </lineage>
</organism>
<sequence>MADNIYVVGHKSPDTDSVTSAITYANLKNQLGMKDVVPAAAGEINNETKYVLEYFKIAPPVVLNDATDKKVILVDHNEVGQAVDNIMKADILEIIDHHKIGDIQTGKPIFFHNEPVGATGTIIASMYELNGVAISKEMAGLMMAAILSDTVLFKSPTCTDKDKATVEKLSKICGEDPQKFGMEMLKAKSDIKSKTAKDILFGDFKKFDFSGVKAGVGQIEVMDLADLAPKREEILAEMRKALESEKLDMIVLMLTDVIKEASDLLFVGTAAAKEGFEKAFGGKVTNNSIYKEKVLSRKKQVIPPLESAFKK</sequence>